<gene>
    <name evidence="1" type="primary">E</name>
    <name type="synonym">sM</name>
    <name type="ORF">4</name>
</gene>
<keyword id="KW-0053">Apoptosis</keyword>
<keyword id="KW-1040">Host Golgi apparatus</keyword>
<keyword id="KW-1043">Host membrane</keyword>
<keyword id="KW-0472">Membrane</keyword>
<keyword id="KW-0812">Transmembrane</keyword>
<keyword id="KW-1133">Transmembrane helix</keyword>
<comment type="function">
    <text evidence="1">Plays a central role in virus morphogenesis and assembly. Acts as a viroporin and self-assembles in host membranes forming pentameric protein-lipid pores that allow ion transport. Also plays a role in the induction of apoptosis.</text>
</comment>
<comment type="subunit">
    <text evidence="1">Homopentamer. Interacts with membrane protein M in the budding compartment of the host cell, which is located between endoplasmic reticulum and the Golgi complex. Interacts with Nucleoprotein.</text>
</comment>
<comment type="subcellular location">
    <subcellularLocation>
        <location evidence="1">Host Golgi apparatus membrane</location>
        <topology evidence="1">Single-pass type III membrane protein</topology>
    </subcellularLocation>
    <text evidence="1">The cytoplasmic tail functions as a Golgi complex-targeting signal.</text>
</comment>
<comment type="similarity">
    <text evidence="1">Belongs to the betacoronaviruses E protein family.</text>
</comment>
<proteinExistence type="inferred from homology"/>
<dbReference type="EMBL" id="DQ648794">
    <property type="protein sequence ID" value="ABG47056.1"/>
    <property type="molecule type" value="Genomic_RNA"/>
</dbReference>
<dbReference type="SMR" id="Q0Q4E8"/>
<dbReference type="Proteomes" id="UP000007449">
    <property type="component" value="Genome"/>
</dbReference>
<dbReference type="GO" id="GO:0044178">
    <property type="term" value="C:host cell Golgi membrane"/>
    <property type="evidence" value="ECO:0007669"/>
    <property type="project" value="UniProtKB-SubCell"/>
</dbReference>
<dbReference type="GO" id="GO:0016020">
    <property type="term" value="C:membrane"/>
    <property type="evidence" value="ECO:0007669"/>
    <property type="project" value="UniProtKB-UniRule"/>
</dbReference>
<dbReference type="GO" id="GO:0140975">
    <property type="term" value="P:disruption of cellular anatomical structure in another organism"/>
    <property type="evidence" value="ECO:0007669"/>
    <property type="project" value="UniProtKB-UniRule"/>
</dbReference>
<dbReference type="GO" id="GO:0046760">
    <property type="term" value="P:viral budding from Golgi membrane"/>
    <property type="evidence" value="ECO:0007669"/>
    <property type="project" value="UniProtKB-UniRule"/>
</dbReference>
<dbReference type="CDD" id="cd21533">
    <property type="entry name" value="MERS-CoV-like_E"/>
    <property type="match status" value="1"/>
</dbReference>
<dbReference type="Gene3D" id="6.10.250.1810">
    <property type="match status" value="1"/>
</dbReference>
<dbReference type="HAMAP" id="MF_04204">
    <property type="entry name" value="BETA_CORONA_E"/>
    <property type="match status" value="1"/>
</dbReference>
<dbReference type="InterPro" id="IPR044379">
    <property type="entry name" value="E_MERS-CoV-like"/>
</dbReference>
<dbReference type="InterPro" id="IPR043506">
    <property type="entry name" value="E_protein_bCoV"/>
</dbReference>
<dbReference type="InterPro" id="IPR003873">
    <property type="entry name" value="E_protein_CoV"/>
</dbReference>
<dbReference type="Pfam" id="PF02723">
    <property type="entry name" value="CoV_E"/>
    <property type="match status" value="1"/>
</dbReference>
<dbReference type="PROSITE" id="PS51926">
    <property type="entry name" value="COV_E"/>
    <property type="match status" value="1"/>
</dbReference>
<accession>Q0Q4E8</accession>
<sequence length="82" mass="9282">MLPFVHEQIGTIIVNFFILTVVCAITLLVCLAVLTAIRLCVQCASGVNTLLFVPAFYIYNTGRNAYFKFQENRPPFPPEDWV</sequence>
<feature type="chain" id="PRO_0000290327" description="Envelope small membrane protein">
    <location>
        <begin position="1"/>
        <end position="82"/>
    </location>
</feature>
<feature type="topological domain" description="Virion surface" evidence="1">
    <location>
        <begin position="1"/>
        <end position="16"/>
    </location>
</feature>
<feature type="transmembrane region" description="Helical" evidence="1">
    <location>
        <begin position="17"/>
        <end position="37"/>
    </location>
</feature>
<feature type="topological domain" description="Intravirion" evidence="1">
    <location>
        <begin position="38"/>
        <end position="78"/>
    </location>
</feature>
<evidence type="ECO:0000255" key="1">
    <source>
        <dbReference type="HAMAP-Rule" id="MF_04204"/>
    </source>
</evidence>
<protein>
    <recommendedName>
        <fullName evidence="1">Envelope small membrane protein</fullName>
        <shortName evidence="1">E protein</shortName>
        <shortName evidence="1">sM protein</shortName>
    </recommendedName>
</protein>
<organismHost>
    <name type="scientific">Tylonycteris pachypus</name>
    <name type="common">Lesser bamboo bat</name>
    <name type="synonym">Vespertilio pachypus</name>
    <dbReference type="NCBI Taxonomy" id="258959"/>
</organismHost>
<reference key="1">
    <citation type="journal article" date="2006" name="J. Virol.">
        <title>Prevalence and genetic diversity of coronaviruses in bats from China.</title>
        <authorList>
            <person name="Tang X.C."/>
            <person name="Zhang J.X."/>
            <person name="Zhang S.Y."/>
            <person name="Wang P."/>
            <person name="Fan X.H."/>
            <person name="Li L.F."/>
            <person name="Li G."/>
            <person name="Dong B.Q."/>
            <person name="Liu W."/>
            <person name="Cheung C.L."/>
            <person name="Xu K.M."/>
            <person name="Song W.J."/>
            <person name="Vijaykrishna D."/>
            <person name="Poon L.L.M."/>
            <person name="Peiris J.S.M."/>
            <person name="Smith G.J."/>
            <person name="Chen H."/>
            <person name="Guan Y."/>
        </authorList>
    </citation>
    <scope>NUCLEOTIDE SEQUENCE [GENOMIC RNA]</scope>
</reference>
<name>VEMP_BC133</name>
<organism>
    <name type="scientific">Bat coronavirus 133/2005</name>
    <name type="common">BtCoV</name>
    <name type="synonym">BtCoV/133/2005</name>
    <dbReference type="NCBI Taxonomy" id="389230"/>
    <lineage>
        <taxon>Viruses</taxon>
        <taxon>Riboviria</taxon>
        <taxon>Orthornavirae</taxon>
        <taxon>Pisuviricota</taxon>
        <taxon>Pisoniviricetes</taxon>
        <taxon>Nidovirales</taxon>
        <taxon>Cornidovirineae</taxon>
        <taxon>Coronaviridae</taxon>
        <taxon>Orthocoronavirinae</taxon>
        <taxon>Betacoronavirus</taxon>
        <taxon>Merbecovirus</taxon>
        <taxon>Bat coronavirus HKU4</taxon>
    </lineage>
</organism>